<gene>
    <name evidence="1" type="primary">uxaC</name>
    <name type="ordered locus">YE3708</name>
</gene>
<dbReference type="EC" id="5.3.1.12" evidence="1"/>
<dbReference type="EMBL" id="AM286415">
    <property type="protein sequence ID" value="CAL13735.1"/>
    <property type="molecule type" value="Genomic_DNA"/>
</dbReference>
<dbReference type="RefSeq" id="WP_005174193.1">
    <property type="nucleotide sequence ID" value="NC_008800.1"/>
</dbReference>
<dbReference type="RefSeq" id="YP_001007863.1">
    <property type="nucleotide sequence ID" value="NC_008800.1"/>
</dbReference>
<dbReference type="SMR" id="A1JR25"/>
<dbReference type="KEGG" id="yen:YE3708"/>
<dbReference type="PATRIC" id="fig|393305.7.peg.3948"/>
<dbReference type="eggNOG" id="COG1904">
    <property type="taxonomic scope" value="Bacteria"/>
</dbReference>
<dbReference type="HOGENOM" id="CLU_044465_1_0_6"/>
<dbReference type="OrthoDB" id="9766564at2"/>
<dbReference type="UniPathway" id="UPA00246"/>
<dbReference type="Proteomes" id="UP000000642">
    <property type="component" value="Chromosome"/>
</dbReference>
<dbReference type="GO" id="GO:0008880">
    <property type="term" value="F:glucuronate isomerase activity"/>
    <property type="evidence" value="ECO:0007669"/>
    <property type="project" value="UniProtKB-UniRule"/>
</dbReference>
<dbReference type="GO" id="GO:0019698">
    <property type="term" value="P:D-galacturonate catabolic process"/>
    <property type="evidence" value="ECO:0007669"/>
    <property type="project" value="TreeGrafter"/>
</dbReference>
<dbReference type="GO" id="GO:0042840">
    <property type="term" value="P:D-glucuronate catabolic process"/>
    <property type="evidence" value="ECO:0007669"/>
    <property type="project" value="TreeGrafter"/>
</dbReference>
<dbReference type="Gene3D" id="3.20.20.140">
    <property type="entry name" value="Metal-dependent hydrolases"/>
    <property type="match status" value="1"/>
</dbReference>
<dbReference type="Gene3D" id="1.10.2020.10">
    <property type="entry name" value="uronate isomerase, domain 2, chain A"/>
    <property type="match status" value="1"/>
</dbReference>
<dbReference type="HAMAP" id="MF_00675">
    <property type="entry name" value="UxaC"/>
    <property type="match status" value="1"/>
</dbReference>
<dbReference type="InterPro" id="IPR032466">
    <property type="entry name" value="Metal_Hydrolase"/>
</dbReference>
<dbReference type="InterPro" id="IPR003766">
    <property type="entry name" value="Uronate_isomerase"/>
</dbReference>
<dbReference type="NCBIfam" id="NF002794">
    <property type="entry name" value="PRK02925.1"/>
    <property type="match status" value="1"/>
</dbReference>
<dbReference type="PANTHER" id="PTHR30068">
    <property type="entry name" value="URONATE ISOMERASE"/>
    <property type="match status" value="1"/>
</dbReference>
<dbReference type="PANTHER" id="PTHR30068:SF4">
    <property type="entry name" value="URONATE ISOMERASE"/>
    <property type="match status" value="1"/>
</dbReference>
<dbReference type="Pfam" id="PF02614">
    <property type="entry name" value="UxaC"/>
    <property type="match status" value="1"/>
</dbReference>
<dbReference type="SUPFAM" id="SSF51556">
    <property type="entry name" value="Metallo-dependent hydrolases"/>
    <property type="match status" value="1"/>
</dbReference>
<comment type="catalytic activity">
    <reaction evidence="1">
        <text>D-glucuronate = D-fructuronate</text>
        <dbReference type="Rhea" id="RHEA:13049"/>
        <dbReference type="ChEBI" id="CHEBI:58720"/>
        <dbReference type="ChEBI" id="CHEBI:59863"/>
        <dbReference type="EC" id="5.3.1.12"/>
    </reaction>
</comment>
<comment type="catalytic activity">
    <reaction evidence="1">
        <text>aldehydo-D-galacturonate = keto-D-tagaturonate</text>
        <dbReference type="Rhea" id="RHEA:27702"/>
        <dbReference type="ChEBI" id="CHEBI:12952"/>
        <dbReference type="ChEBI" id="CHEBI:17886"/>
        <dbReference type="EC" id="5.3.1.12"/>
    </reaction>
</comment>
<comment type="pathway">
    <text evidence="1">Carbohydrate metabolism; pentose and glucuronate interconversion.</text>
</comment>
<comment type="similarity">
    <text evidence="1">Belongs to the metallo-dependent hydrolases superfamily. Uronate isomerase family.</text>
</comment>
<evidence type="ECO:0000255" key="1">
    <source>
        <dbReference type="HAMAP-Rule" id="MF_00675"/>
    </source>
</evidence>
<protein>
    <recommendedName>
        <fullName evidence="1">Uronate isomerase</fullName>
        <ecNumber evidence="1">5.3.1.12</ecNumber>
    </recommendedName>
    <alternativeName>
        <fullName evidence="1">Glucuronate isomerase</fullName>
    </alternativeName>
    <alternativeName>
        <fullName evidence="1">Uronic isomerase</fullName>
    </alternativeName>
</protein>
<sequence length="469" mass="53408">MAQFLTEDFLLDTEFARRLYHDYAKDQPIYDYHCHLPPEQIAENTRFKNLYDIWLKGDHYKWRAMRTNGVAERFCTGDASDREKFDAWAATVPHTIGNPLYHWTHLELRRPFGITGKLLSPATADEIWQRGNELLAQDSFSARGIMQKMNVKMVGTTDDPIDDLRHHKAIAADGSFNIKVLPSWRPDKAFNIEAAGFNDYMQRLEAAADTSISRFADLCTALNKRMDHFAAHGCKVSDHALDVVVYGEADEATLDGILARRLAGNQPSTEETAQFKTAVLLFLSGEYHRREWVQQYHIGALRNNNSRMFNLVGPDIGFDSINDQPLAQPLSRLLDAQGLRNALPKTILYCLNPRDNEVIGTMVGNFQGEGAAGKMQFGSGWWFNDQKDGMQRQMTQLAQLGLLSRFVGMLTDSRSFLSYTRHEYFRRILCQMIGRWVEDGEAPADIELLGSMVKNICFDNAKQYFAIEL</sequence>
<proteinExistence type="inferred from homology"/>
<feature type="chain" id="PRO_1000044783" description="Uronate isomerase">
    <location>
        <begin position="1"/>
        <end position="469"/>
    </location>
</feature>
<accession>A1JR25</accession>
<organism>
    <name type="scientific">Yersinia enterocolitica serotype O:8 / biotype 1B (strain NCTC 13174 / 8081)</name>
    <dbReference type="NCBI Taxonomy" id="393305"/>
    <lineage>
        <taxon>Bacteria</taxon>
        <taxon>Pseudomonadati</taxon>
        <taxon>Pseudomonadota</taxon>
        <taxon>Gammaproteobacteria</taxon>
        <taxon>Enterobacterales</taxon>
        <taxon>Yersiniaceae</taxon>
        <taxon>Yersinia</taxon>
    </lineage>
</organism>
<reference key="1">
    <citation type="journal article" date="2006" name="PLoS Genet.">
        <title>The complete genome sequence and comparative genome analysis of the high pathogenicity Yersinia enterocolitica strain 8081.</title>
        <authorList>
            <person name="Thomson N.R."/>
            <person name="Howard S."/>
            <person name="Wren B.W."/>
            <person name="Holden M.T.G."/>
            <person name="Crossman L."/>
            <person name="Challis G.L."/>
            <person name="Churcher C."/>
            <person name="Mungall K."/>
            <person name="Brooks K."/>
            <person name="Chillingworth T."/>
            <person name="Feltwell T."/>
            <person name="Abdellah Z."/>
            <person name="Hauser H."/>
            <person name="Jagels K."/>
            <person name="Maddison M."/>
            <person name="Moule S."/>
            <person name="Sanders M."/>
            <person name="Whitehead S."/>
            <person name="Quail M.A."/>
            <person name="Dougan G."/>
            <person name="Parkhill J."/>
            <person name="Prentice M.B."/>
        </authorList>
    </citation>
    <scope>NUCLEOTIDE SEQUENCE [LARGE SCALE GENOMIC DNA]</scope>
    <source>
        <strain>NCTC 13174 / 8081</strain>
    </source>
</reference>
<name>UXAC_YERE8</name>
<keyword id="KW-0413">Isomerase</keyword>